<sequence>MPSLRLLAILTTLLAVVLMATQSSATRTTRRPKPQNTKKPPRGGGTGGGGGGGDQPARLGFRQTTTTMSPSSSLGTDETTEDTMTDAYSLSPTDSTTYAGDAYPTEFHTDSMALPGAGMGNYTLDYSHCYLNVCECCPPEKGPVGPPGERGPPGPGAERAPAVPSETLALMLGTDIYTHTFKIPILLSFYLIGDKGDQGDTGMPGAPGILGKEGQKGDLGPKGEKGETGLPGLKGDLGERGKPGWNGTQGEKGDLGKIGPAGPSGLTGPMGQNGQKGEMGECPTGEKGEKGEAGLPGPPGPRGSVGPPGVNGSNGLPGPVGLRGQLGSPGGKGEAGGRGPPGLRGMPGPKGEKGPKGPRGVRGPKGPQGETAEQIRSAFSVGLFPSKSFPPPGLPVKFDKVLYNEEEHWDPMLSKFNCTHPGVYVFSYHITVRNRPLRAALVINGVKKLRTRDSLYGQDIDQASNLALLRLASGDQVWLETLRDWNGVYSSSEDDSTFTGFLLYADPKA</sequence>
<organism>
    <name type="scientific">Oncorhynchus mykiss</name>
    <name type="common">Rainbow trout</name>
    <name type="synonym">Salmo gairdneri</name>
    <dbReference type="NCBI Taxonomy" id="8022"/>
    <lineage>
        <taxon>Eukaryota</taxon>
        <taxon>Metazoa</taxon>
        <taxon>Chordata</taxon>
        <taxon>Craniata</taxon>
        <taxon>Vertebrata</taxon>
        <taxon>Euteleostomi</taxon>
        <taxon>Actinopterygii</taxon>
        <taxon>Neopterygii</taxon>
        <taxon>Teleostei</taxon>
        <taxon>Protacanthopterygii</taxon>
        <taxon>Salmoniformes</taxon>
        <taxon>Salmonidae</taxon>
        <taxon>Salmoninae</taxon>
        <taxon>Oncorhynchus</taxon>
    </lineage>
</organism>
<dbReference type="EMBL" id="FR904664">
    <property type="protein sequence ID" value="CDQ69321.1"/>
    <property type="molecule type" value="Genomic_DNA"/>
</dbReference>
<dbReference type="SMR" id="A0A060WQA3"/>
<dbReference type="STRING" id="8022.A0A060WQA3"/>
<dbReference type="GlyCosmos" id="A0A060WQA3">
    <property type="glycosylation" value="4 sites, No reported glycans"/>
</dbReference>
<dbReference type="PaxDb" id="8022-A0A060WQA3"/>
<dbReference type="Proteomes" id="UP000193380">
    <property type="component" value="Unassembled WGS sequence"/>
</dbReference>
<dbReference type="Proteomes" id="UP000694395">
    <property type="component" value="Unplaced"/>
</dbReference>
<dbReference type="GO" id="GO:0005581">
    <property type="term" value="C:collagen trimer"/>
    <property type="evidence" value="ECO:0007669"/>
    <property type="project" value="UniProtKB-KW"/>
</dbReference>
<dbReference type="GO" id="GO:0005576">
    <property type="term" value="C:extracellular region"/>
    <property type="evidence" value="ECO:0007669"/>
    <property type="project" value="UniProtKB-KW"/>
</dbReference>
<dbReference type="GO" id="GO:0005509">
    <property type="term" value="F:calcium ion binding"/>
    <property type="evidence" value="ECO:0000250"/>
    <property type="project" value="UniProtKB"/>
</dbReference>
<dbReference type="GO" id="GO:0045299">
    <property type="term" value="P:otolith mineralization"/>
    <property type="evidence" value="ECO:0000250"/>
    <property type="project" value="UniProtKB"/>
</dbReference>
<dbReference type="FunFam" id="2.60.120.40:FF:000001">
    <property type="entry name" value="Complement C1q B chain"/>
    <property type="match status" value="1"/>
</dbReference>
<dbReference type="Gene3D" id="2.60.120.40">
    <property type="match status" value="1"/>
</dbReference>
<dbReference type="InterPro" id="IPR001073">
    <property type="entry name" value="C1q_dom"/>
</dbReference>
<dbReference type="InterPro" id="IPR008160">
    <property type="entry name" value="Collagen"/>
</dbReference>
<dbReference type="InterPro" id="IPR050392">
    <property type="entry name" value="Collagen/C1q_domain"/>
</dbReference>
<dbReference type="InterPro" id="IPR008983">
    <property type="entry name" value="Tumour_necrosis_fac-like_dom"/>
</dbReference>
<dbReference type="PANTHER" id="PTHR15427">
    <property type="entry name" value="EMILIN ELASTIN MICROFIBRIL INTERFACE-LOCATED PROTEIN ELASTIN MICROFIBRIL INTERFACER"/>
    <property type="match status" value="1"/>
</dbReference>
<dbReference type="PANTHER" id="PTHR15427:SF51">
    <property type="entry name" value="OTOLIN 1"/>
    <property type="match status" value="1"/>
</dbReference>
<dbReference type="Pfam" id="PF00386">
    <property type="entry name" value="C1q"/>
    <property type="match status" value="1"/>
</dbReference>
<dbReference type="Pfam" id="PF01391">
    <property type="entry name" value="Collagen"/>
    <property type="match status" value="4"/>
</dbReference>
<dbReference type="PRINTS" id="PR00007">
    <property type="entry name" value="COMPLEMNTC1Q"/>
</dbReference>
<dbReference type="SMART" id="SM00110">
    <property type="entry name" value="C1Q"/>
    <property type="match status" value="1"/>
</dbReference>
<dbReference type="SUPFAM" id="SSF49842">
    <property type="entry name" value="TNF-like"/>
    <property type="match status" value="1"/>
</dbReference>
<dbReference type="PROSITE" id="PS50871">
    <property type="entry name" value="C1Q"/>
    <property type="match status" value="1"/>
</dbReference>
<proteinExistence type="evidence at protein level"/>
<keyword id="KW-0106">Calcium</keyword>
<keyword id="KW-0176">Collagen</keyword>
<keyword id="KW-1015">Disulfide bond</keyword>
<keyword id="KW-0272">Extracellular matrix</keyword>
<keyword id="KW-0325">Glycoprotein</keyword>
<keyword id="KW-0479">Metal-binding</keyword>
<keyword id="KW-1185">Reference proteome</keyword>
<keyword id="KW-0677">Repeat</keyword>
<keyword id="KW-0964">Secreted</keyword>
<keyword id="KW-0732">Signal</keyword>
<protein>
    <recommendedName>
        <fullName evidence="8">Otolin-1</fullName>
    </recommendedName>
</protein>
<feature type="signal peptide" evidence="3">
    <location>
        <begin position="1"/>
        <end position="25"/>
    </location>
</feature>
<feature type="chain" id="PRO_5001590201" description="Otolin-1" evidence="3">
    <location>
        <begin position="26"/>
        <end position="509"/>
    </location>
</feature>
<feature type="domain" description="Collagen-like 1" evidence="3">
    <location>
        <begin position="193"/>
        <end position="244"/>
    </location>
</feature>
<feature type="domain" description="Collagen-like 2" evidence="3">
    <location>
        <begin position="285"/>
        <end position="329"/>
    </location>
</feature>
<feature type="domain" description="C1q" evidence="4">
    <location>
        <begin position="372"/>
        <end position="509"/>
    </location>
</feature>
<feature type="region of interest" description="Disordered" evidence="6">
    <location>
        <begin position="23"/>
        <end position="96"/>
    </location>
</feature>
<feature type="region of interest" description="Disordered" evidence="6">
    <location>
        <begin position="202"/>
        <end position="372"/>
    </location>
</feature>
<feature type="compositionally biased region" description="Gly residues" evidence="6">
    <location>
        <begin position="42"/>
        <end position="54"/>
    </location>
</feature>
<feature type="compositionally biased region" description="Polar residues" evidence="6">
    <location>
        <begin position="62"/>
        <end position="75"/>
    </location>
</feature>
<feature type="compositionally biased region" description="Basic and acidic residues" evidence="6">
    <location>
        <begin position="213"/>
        <end position="227"/>
    </location>
</feature>
<feature type="compositionally biased region" description="Low complexity" evidence="6">
    <location>
        <begin position="302"/>
        <end position="322"/>
    </location>
</feature>
<feature type="compositionally biased region" description="Gly residues" evidence="6">
    <location>
        <begin position="327"/>
        <end position="342"/>
    </location>
</feature>
<feature type="glycosylation site" description="N-linked (GlcNAc...) asparagine" evidence="5">
    <location>
        <position position="121"/>
    </location>
</feature>
<feature type="glycosylation site" description="N-linked (GlcNAc...) asparagine" evidence="5">
    <location>
        <position position="246"/>
    </location>
</feature>
<feature type="glycosylation site" description="N-linked (GlcNAc...) asparagine" evidence="5">
    <location>
        <position position="311"/>
    </location>
</feature>
<feature type="glycosylation site" description="N-linked (GlcNAc...) asparagine" evidence="5">
    <location>
        <position position="417"/>
    </location>
</feature>
<accession>A0A060WQA3</accession>
<reference key="1">
    <citation type="journal article" date="2014" name="Nat. Commun.">
        <title>The rainbow trout genome provides novel insights into evolution after whole-genome duplication in vertebrates.</title>
        <authorList>
            <person name="Berthelot C."/>
            <person name="Brunet F."/>
            <person name="Chalopin D."/>
            <person name="Juanchich A."/>
            <person name="Bernard M."/>
            <person name="Noel B."/>
            <person name="Bento P."/>
            <person name="Da Silva C."/>
            <person name="Labadie K."/>
            <person name="Alberti A."/>
            <person name="Aury J.M."/>
            <person name="Louis A."/>
            <person name="Dehais P."/>
            <person name="Bardou P."/>
            <person name="Montfort J."/>
            <person name="Klopp C."/>
            <person name="Cabau C."/>
            <person name="Gaspin C."/>
            <person name="Thorgaard G.H."/>
            <person name="Boussaha M."/>
            <person name="Quillet E."/>
            <person name="Guyomard R."/>
            <person name="Galiana D."/>
            <person name="Bobe J."/>
            <person name="Volff J.N."/>
            <person name="Genet C."/>
            <person name="Wincker P."/>
            <person name="Jaillon O."/>
            <person name="Roest Crollius H."/>
            <person name="Guiguen Y."/>
        </authorList>
    </citation>
    <scope>NUCLEOTIDE SEQUENCE [LARGE SCALE GENOMIC DNA]</scope>
</reference>
<reference key="2">
    <citation type="journal article" date="2004" name="Histochem. Cell Biol.">
        <title>Immunohistochemical localization of two otolith matrix proteins in the otolith and inner ear of the rainbow trout, Oncorhynchus mykiss: comparative aspects between the adult inner ear and embryonic otocysts.</title>
        <authorList>
            <person name="Murayama E."/>
            <person name="Takagi Y."/>
            <person name="Nagasawa H."/>
        </authorList>
    </citation>
    <scope>INTERACTION WITH OTOMP</scope>
</reference>
<name>OTOL1_ONCMY</name>
<gene>
    <name type="primary">Otol1</name>
    <name evidence="9" type="ORF">GSONMT00063289001</name>
</gene>
<comment type="function">
    <text evidence="1">Collagen-like protein, which provides an organic scaffold for otoliths onto the sensory epithelium of the inner ear. Acts as a scaffold for biomineralization by sequestering calcium.</text>
</comment>
<comment type="subunit">
    <text evidence="1 7">Homooligomer; disulfide-linked; probably forms homotrimers (By similarity). Interacts with otomp (PubMed:14689310).</text>
</comment>
<comment type="subcellular location">
    <subcellularLocation>
        <location evidence="2">Secreted</location>
        <location evidence="2">Extracellular space</location>
        <location evidence="2">Extracellular matrix</location>
    </subcellularLocation>
    <text evidence="2">Localized in both the surrounding otoconial matrix and otoconia.</text>
</comment>
<comment type="domain">
    <text evidence="1">The C1q domain mediates calcium-binding.</text>
</comment>
<comment type="similarity">
    <text evidence="8">Belongs to the OTOL1 family.</text>
</comment>
<evidence type="ECO:0000250" key="1">
    <source>
        <dbReference type="UniProtKB" id="A5PN28"/>
    </source>
</evidence>
<evidence type="ECO:0000250" key="2">
    <source>
        <dbReference type="UniProtKB" id="Q4ZJM7"/>
    </source>
</evidence>
<evidence type="ECO:0000255" key="3"/>
<evidence type="ECO:0000255" key="4">
    <source>
        <dbReference type="PROSITE-ProRule" id="PRU00368"/>
    </source>
</evidence>
<evidence type="ECO:0000255" key="5">
    <source>
        <dbReference type="PROSITE-ProRule" id="PRU00498"/>
    </source>
</evidence>
<evidence type="ECO:0000256" key="6">
    <source>
        <dbReference type="SAM" id="MobiDB-lite"/>
    </source>
</evidence>
<evidence type="ECO:0000269" key="7">
    <source>
    </source>
</evidence>
<evidence type="ECO:0000305" key="8"/>
<evidence type="ECO:0000312" key="9">
    <source>
        <dbReference type="EMBL" id="CDQ69321.1"/>
    </source>
</evidence>